<protein>
    <recommendedName>
        <fullName evidence="1">Proline--tRNA ligase 2</fullName>
        <ecNumber evidence="1">6.1.1.15</ecNumber>
    </recommendedName>
    <alternativeName>
        <fullName evidence="1">Prolyl-tRNA synthetase 2</fullName>
        <shortName evidence="1">ProRS 2</shortName>
    </alternativeName>
</protein>
<accession>Q18CD7</accession>
<evidence type="ECO:0000255" key="1">
    <source>
        <dbReference type="HAMAP-Rule" id="MF_01571"/>
    </source>
</evidence>
<proteinExistence type="inferred from homology"/>
<reference key="1">
    <citation type="journal article" date="2006" name="Nat. Genet.">
        <title>The multidrug-resistant human pathogen Clostridium difficile has a highly mobile, mosaic genome.</title>
        <authorList>
            <person name="Sebaihia M."/>
            <person name="Wren B.W."/>
            <person name="Mullany P."/>
            <person name="Fairweather N.F."/>
            <person name="Minton N."/>
            <person name="Stabler R."/>
            <person name="Thomson N.R."/>
            <person name="Roberts A.P."/>
            <person name="Cerdeno-Tarraga A.M."/>
            <person name="Wang H."/>
            <person name="Holden M.T.G."/>
            <person name="Wright A."/>
            <person name="Churcher C."/>
            <person name="Quail M.A."/>
            <person name="Baker S."/>
            <person name="Bason N."/>
            <person name="Brooks K."/>
            <person name="Chillingworth T."/>
            <person name="Cronin A."/>
            <person name="Davis P."/>
            <person name="Dowd L."/>
            <person name="Fraser A."/>
            <person name="Feltwell T."/>
            <person name="Hance Z."/>
            <person name="Holroyd S."/>
            <person name="Jagels K."/>
            <person name="Moule S."/>
            <person name="Mungall K."/>
            <person name="Price C."/>
            <person name="Rabbinowitsch E."/>
            <person name="Sharp S."/>
            <person name="Simmonds M."/>
            <person name="Stevens K."/>
            <person name="Unwin L."/>
            <person name="Whithead S."/>
            <person name="Dupuy B."/>
            <person name="Dougan G."/>
            <person name="Barrell B."/>
            <person name="Parkhill J."/>
        </authorList>
    </citation>
    <scope>NUCLEOTIDE SEQUENCE [LARGE SCALE GENOMIC DNA]</scope>
    <source>
        <strain>630</strain>
    </source>
</reference>
<gene>
    <name evidence="1" type="primary">proS2</name>
    <name type="ordered locus">CD630_00500</name>
</gene>
<organism>
    <name type="scientific">Clostridioides difficile (strain 630)</name>
    <name type="common">Peptoclostridium difficile</name>
    <dbReference type="NCBI Taxonomy" id="272563"/>
    <lineage>
        <taxon>Bacteria</taxon>
        <taxon>Bacillati</taxon>
        <taxon>Bacillota</taxon>
        <taxon>Clostridia</taxon>
        <taxon>Peptostreptococcales</taxon>
        <taxon>Peptostreptococcaceae</taxon>
        <taxon>Clostridioides</taxon>
    </lineage>
</organism>
<keyword id="KW-0030">Aminoacyl-tRNA synthetase</keyword>
<keyword id="KW-0067">ATP-binding</keyword>
<keyword id="KW-0963">Cytoplasm</keyword>
<keyword id="KW-0436">Ligase</keyword>
<keyword id="KW-0547">Nucleotide-binding</keyword>
<keyword id="KW-0648">Protein biosynthesis</keyword>
<keyword id="KW-1185">Reference proteome</keyword>
<feature type="chain" id="PRO_0000288406" description="Proline--tRNA ligase 2">
    <location>
        <begin position="1"/>
        <end position="481"/>
    </location>
</feature>
<name>SYP2_CLOD6</name>
<sequence>MAKNEKQFVEEITKMEDDFPQWYTDVITKTDLVDYAPVKGFMVVKPYGYALWEKMQEFMDKKFKETGHKNCYFPLLIPESLLNKEAEHVEGFAPEVAWVTHGGNKKLEERLCVRPTSETIICTMYAKWLKSYRELPYLYNQWCSVVRWEKSTRPFLRTSEFLWQEGHTLHETAEEAQEETIQQLEVYKALCEELLAMPVVAGQKSESEKFAGGERTYTIEAMMHDGKALQSGTSHFLGQHFTKAFDITFADREGNLANPYHTSWGASTRLIGGLIMTHSDNRGLVLPPRVAPIQVVIVPIAAKKGNVMETVDKIYADLKAKGVAVEVDDRDNYTTGWKFNEWEMKGVPVRVEIGPKDIENNQAMVFRRDTLEKDSMPLEGLADAICDLFDVIHNDMFEKARKHREDNTSIVENMDEFRKALEEKPGFIKTMWCGDAECEAKIKEETGATIRCLPFEQENLGHKCVYCGKEADSMVVMAKAY</sequence>
<dbReference type="EC" id="6.1.1.15" evidence="1"/>
<dbReference type="EMBL" id="AM180355">
    <property type="protein sequence ID" value="CAJ66864.1"/>
    <property type="molecule type" value="Genomic_DNA"/>
</dbReference>
<dbReference type="RefSeq" id="YP_001086513.1">
    <property type="nucleotide sequence ID" value="NC_009089.1"/>
</dbReference>
<dbReference type="SMR" id="Q18CD7"/>
<dbReference type="STRING" id="272563.CD630_00500"/>
<dbReference type="EnsemblBacteria" id="CAJ66864">
    <property type="protein sequence ID" value="CAJ66864"/>
    <property type="gene ID" value="CD630_00500"/>
</dbReference>
<dbReference type="KEGG" id="cdf:CD630_00500"/>
<dbReference type="KEGG" id="pdc:CDIF630_00113"/>
<dbReference type="PATRIC" id="fig|272563.120.peg.54"/>
<dbReference type="eggNOG" id="COG0442">
    <property type="taxonomic scope" value="Bacteria"/>
</dbReference>
<dbReference type="OrthoDB" id="9809052at2"/>
<dbReference type="PhylomeDB" id="Q18CD7"/>
<dbReference type="BioCyc" id="PDIF272563:G12WB-102-MONOMER"/>
<dbReference type="Proteomes" id="UP000001978">
    <property type="component" value="Chromosome"/>
</dbReference>
<dbReference type="GO" id="GO:0017101">
    <property type="term" value="C:aminoacyl-tRNA synthetase multienzyme complex"/>
    <property type="evidence" value="ECO:0007669"/>
    <property type="project" value="TreeGrafter"/>
</dbReference>
<dbReference type="GO" id="GO:0005737">
    <property type="term" value="C:cytoplasm"/>
    <property type="evidence" value="ECO:0007669"/>
    <property type="project" value="UniProtKB-SubCell"/>
</dbReference>
<dbReference type="GO" id="GO:0005524">
    <property type="term" value="F:ATP binding"/>
    <property type="evidence" value="ECO:0007669"/>
    <property type="project" value="UniProtKB-UniRule"/>
</dbReference>
<dbReference type="GO" id="GO:0140096">
    <property type="term" value="F:catalytic activity, acting on a protein"/>
    <property type="evidence" value="ECO:0007669"/>
    <property type="project" value="UniProtKB-ARBA"/>
</dbReference>
<dbReference type="GO" id="GO:0004827">
    <property type="term" value="F:proline-tRNA ligase activity"/>
    <property type="evidence" value="ECO:0007669"/>
    <property type="project" value="UniProtKB-UniRule"/>
</dbReference>
<dbReference type="GO" id="GO:0016740">
    <property type="term" value="F:transferase activity"/>
    <property type="evidence" value="ECO:0007669"/>
    <property type="project" value="UniProtKB-ARBA"/>
</dbReference>
<dbReference type="GO" id="GO:0006433">
    <property type="term" value="P:prolyl-tRNA aminoacylation"/>
    <property type="evidence" value="ECO:0007669"/>
    <property type="project" value="UniProtKB-UniRule"/>
</dbReference>
<dbReference type="CDD" id="cd00862">
    <property type="entry name" value="ProRS_anticodon_zinc"/>
    <property type="match status" value="1"/>
</dbReference>
<dbReference type="CDD" id="cd00778">
    <property type="entry name" value="ProRS_core_arch_euk"/>
    <property type="match status" value="1"/>
</dbReference>
<dbReference type="FunFam" id="3.40.50.800:FF:000005">
    <property type="entry name" value="bifunctional glutamate/proline--tRNA ligase"/>
    <property type="match status" value="1"/>
</dbReference>
<dbReference type="FunFam" id="3.30.110.30:FF:000005">
    <property type="entry name" value="Proline--tRNA ligase"/>
    <property type="match status" value="1"/>
</dbReference>
<dbReference type="FunFam" id="3.30.930.10:FF:000023">
    <property type="entry name" value="Proline--tRNA ligase"/>
    <property type="match status" value="1"/>
</dbReference>
<dbReference type="Gene3D" id="3.40.50.800">
    <property type="entry name" value="Anticodon-binding domain"/>
    <property type="match status" value="1"/>
</dbReference>
<dbReference type="Gene3D" id="3.30.930.10">
    <property type="entry name" value="Bira Bifunctional Protein, Domain 2"/>
    <property type="match status" value="1"/>
</dbReference>
<dbReference type="Gene3D" id="3.30.110.30">
    <property type="entry name" value="C-terminal domain of ProRS"/>
    <property type="match status" value="1"/>
</dbReference>
<dbReference type="HAMAP" id="MF_01571">
    <property type="entry name" value="Pro_tRNA_synth_type3"/>
    <property type="match status" value="1"/>
</dbReference>
<dbReference type="InterPro" id="IPR002314">
    <property type="entry name" value="aa-tRNA-synt_IIb"/>
</dbReference>
<dbReference type="InterPro" id="IPR006195">
    <property type="entry name" value="aa-tRNA-synth_II"/>
</dbReference>
<dbReference type="InterPro" id="IPR045864">
    <property type="entry name" value="aa-tRNA-synth_II/BPL/LPL"/>
</dbReference>
<dbReference type="InterPro" id="IPR004154">
    <property type="entry name" value="Anticodon-bd"/>
</dbReference>
<dbReference type="InterPro" id="IPR036621">
    <property type="entry name" value="Anticodon-bd_dom_sf"/>
</dbReference>
<dbReference type="InterPro" id="IPR002316">
    <property type="entry name" value="Pro-tRNA-ligase_IIa"/>
</dbReference>
<dbReference type="InterPro" id="IPR004499">
    <property type="entry name" value="Pro-tRNA-ligase_IIa_arc-type"/>
</dbReference>
<dbReference type="InterPro" id="IPR016061">
    <property type="entry name" value="Pro-tRNA_ligase_II_C"/>
</dbReference>
<dbReference type="InterPro" id="IPR017449">
    <property type="entry name" value="Pro-tRNA_synth_II"/>
</dbReference>
<dbReference type="InterPro" id="IPR033721">
    <property type="entry name" value="ProRS_core_arch_euk"/>
</dbReference>
<dbReference type="NCBIfam" id="TIGR00408">
    <property type="entry name" value="proS_fam_I"/>
    <property type="match status" value="1"/>
</dbReference>
<dbReference type="PANTHER" id="PTHR43382:SF2">
    <property type="entry name" value="BIFUNCTIONAL GLUTAMATE_PROLINE--TRNA LIGASE"/>
    <property type="match status" value="1"/>
</dbReference>
<dbReference type="PANTHER" id="PTHR43382">
    <property type="entry name" value="PROLYL-TRNA SYNTHETASE"/>
    <property type="match status" value="1"/>
</dbReference>
<dbReference type="Pfam" id="PF03129">
    <property type="entry name" value="HGTP_anticodon"/>
    <property type="match status" value="1"/>
</dbReference>
<dbReference type="Pfam" id="PF09180">
    <property type="entry name" value="ProRS-C_1"/>
    <property type="match status" value="1"/>
</dbReference>
<dbReference type="Pfam" id="PF00587">
    <property type="entry name" value="tRNA-synt_2b"/>
    <property type="match status" value="1"/>
</dbReference>
<dbReference type="PRINTS" id="PR01046">
    <property type="entry name" value="TRNASYNTHPRO"/>
</dbReference>
<dbReference type="SMART" id="SM00946">
    <property type="entry name" value="ProRS-C_1"/>
    <property type="match status" value="1"/>
</dbReference>
<dbReference type="SUPFAM" id="SSF64586">
    <property type="entry name" value="C-terminal domain of ProRS"/>
    <property type="match status" value="1"/>
</dbReference>
<dbReference type="SUPFAM" id="SSF52954">
    <property type="entry name" value="Class II aaRS ABD-related"/>
    <property type="match status" value="1"/>
</dbReference>
<dbReference type="SUPFAM" id="SSF55681">
    <property type="entry name" value="Class II aaRS and biotin synthetases"/>
    <property type="match status" value="1"/>
</dbReference>
<dbReference type="PROSITE" id="PS50862">
    <property type="entry name" value="AA_TRNA_LIGASE_II"/>
    <property type="match status" value="1"/>
</dbReference>
<comment type="function">
    <text evidence="1">Catalyzes the attachment of proline to tRNA(Pro) in a two-step reaction: proline is first activated by ATP to form Pro-AMP and then transferred to the acceptor end of tRNA(Pro).</text>
</comment>
<comment type="catalytic activity">
    <reaction evidence="1">
        <text>tRNA(Pro) + L-proline + ATP = L-prolyl-tRNA(Pro) + AMP + diphosphate</text>
        <dbReference type="Rhea" id="RHEA:14305"/>
        <dbReference type="Rhea" id="RHEA-COMP:9700"/>
        <dbReference type="Rhea" id="RHEA-COMP:9702"/>
        <dbReference type="ChEBI" id="CHEBI:30616"/>
        <dbReference type="ChEBI" id="CHEBI:33019"/>
        <dbReference type="ChEBI" id="CHEBI:60039"/>
        <dbReference type="ChEBI" id="CHEBI:78442"/>
        <dbReference type="ChEBI" id="CHEBI:78532"/>
        <dbReference type="ChEBI" id="CHEBI:456215"/>
        <dbReference type="EC" id="6.1.1.15"/>
    </reaction>
</comment>
<comment type="subunit">
    <text evidence="1">Homodimer.</text>
</comment>
<comment type="subcellular location">
    <subcellularLocation>
        <location evidence="1">Cytoplasm</location>
    </subcellularLocation>
</comment>
<comment type="domain">
    <text evidence="1">Consists of three domains: the N-terminal catalytic domain, the anticodon-binding domain and the C-terminal extension.</text>
</comment>
<comment type="similarity">
    <text evidence="1">Belongs to the class-II aminoacyl-tRNA synthetase family. ProS type 3 subfamily.</text>
</comment>